<dbReference type="EMBL" id="CP000094">
    <property type="protein sequence ID" value="ABA75321.1"/>
    <property type="molecule type" value="Genomic_DNA"/>
</dbReference>
<dbReference type="RefSeq" id="WP_007958188.1">
    <property type="nucleotide sequence ID" value="NC_007492.2"/>
</dbReference>
<dbReference type="SMR" id="Q3KA83"/>
<dbReference type="KEGG" id="pfo:Pfl01_3583"/>
<dbReference type="eggNOG" id="COG0239">
    <property type="taxonomic scope" value="Bacteria"/>
</dbReference>
<dbReference type="HOGENOM" id="CLU_114342_1_2_6"/>
<dbReference type="Proteomes" id="UP000002704">
    <property type="component" value="Chromosome"/>
</dbReference>
<dbReference type="GO" id="GO:0005886">
    <property type="term" value="C:plasma membrane"/>
    <property type="evidence" value="ECO:0007669"/>
    <property type="project" value="UniProtKB-SubCell"/>
</dbReference>
<dbReference type="GO" id="GO:0062054">
    <property type="term" value="F:fluoride channel activity"/>
    <property type="evidence" value="ECO:0007669"/>
    <property type="project" value="UniProtKB-UniRule"/>
</dbReference>
<dbReference type="GO" id="GO:0046872">
    <property type="term" value="F:metal ion binding"/>
    <property type="evidence" value="ECO:0007669"/>
    <property type="project" value="UniProtKB-KW"/>
</dbReference>
<dbReference type="GO" id="GO:0140114">
    <property type="term" value="P:cellular detoxification of fluoride"/>
    <property type="evidence" value="ECO:0007669"/>
    <property type="project" value="UniProtKB-UniRule"/>
</dbReference>
<dbReference type="HAMAP" id="MF_00454">
    <property type="entry name" value="FluC"/>
    <property type="match status" value="1"/>
</dbReference>
<dbReference type="InterPro" id="IPR003691">
    <property type="entry name" value="FluC"/>
</dbReference>
<dbReference type="NCBIfam" id="TIGR00494">
    <property type="entry name" value="crcB"/>
    <property type="match status" value="1"/>
</dbReference>
<dbReference type="NCBIfam" id="NF010830">
    <property type="entry name" value="PRK14234.1"/>
    <property type="match status" value="1"/>
</dbReference>
<dbReference type="PANTHER" id="PTHR28259">
    <property type="entry name" value="FLUORIDE EXPORT PROTEIN 1-RELATED"/>
    <property type="match status" value="1"/>
</dbReference>
<dbReference type="PANTHER" id="PTHR28259:SF1">
    <property type="entry name" value="FLUORIDE EXPORT PROTEIN 1-RELATED"/>
    <property type="match status" value="1"/>
</dbReference>
<dbReference type="Pfam" id="PF02537">
    <property type="entry name" value="CRCB"/>
    <property type="match status" value="1"/>
</dbReference>
<proteinExistence type="inferred from homology"/>
<reference key="1">
    <citation type="journal article" date="2009" name="Genome Biol.">
        <title>Genomic and genetic analyses of diversity and plant interactions of Pseudomonas fluorescens.</title>
        <authorList>
            <person name="Silby M.W."/>
            <person name="Cerdeno-Tarraga A.M."/>
            <person name="Vernikos G.S."/>
            <person name="Giddens S.R."/>
            <person name="Jackson R.W."/>
            <person name="Preston G.M."/>
            <person name="Zhang X.-X."/>
            <person name="Moon C.D."/>
            <person name="Gehrig S.M."/>
            <person name="Godfrey S.A.C."/>
            <person name="Knight C.G."/>
            <person name="Malone J.G."/>
            <person name="Robinson Z."/>
            <person name="Spiers A.J."/>
            <person name="Harris S."/>
            <person name="Challis G.L."/>
            <person name="Yaxley A.M."/>
            <person name="Harris D."/>
            <person name="Seeger K."/>
            <person name="Murphy L."/>
            <person name="Rutter S."/>
            <person name="Squares R."/>
            <person name="Quail M.A."/>
            <person name="Saunders E."/>
            <person name="Mavromatis K."/>
            <person name="Brettin T.S."/>
            <person name="Bentley S.D."/>
            <person name="Hothersall J."/>
            <person name="Stephens E."/>
            <person name="Thomas C.M."/>
            <person name="Parkhill J."/>
            <person name="Levy S.B."/>
            <person name="Rainey P.B."/>
            <person name="Thomson N.R."/>
        </authorList>
    </citation>
    <scope>NUCLEOTIDE SEQUENCE [LARGE SCALE GENOMIC DNA]</scope>
    <source>
        <strain>Pf0-1</strain>
    </source>
</reference>
<organism>
    <name type="scientific">Pseudomonas fluorescens (strain Pf0-1)</name>
    <dbReference type="NCBI Taxonomy" id="205922"/>
    <lineage>
        <taxon>Bacteria</taxon>
        <taxon>Pseudomonadati</taxon>
        <taxon>Pseudomonadota</taxon>
        <taxon>Gammaproteobacteria</taxon>
        <taxon>Pseudomonadales</taxon>
        <taxon>Pseudomonadaceae</taxon>
        <taxon>Pseudomonas</taxon>
    </lineage>
</organism>
<feature type="chain" id="PRO_0000252915" description="Fluoride-specific ion channel FluC">
    <location>
        <begin position="1"/>
        <end position="124"/>
    </location>
</feature>
<feature type="transmembrane region" description="Helical" evidence="1">
    <location>
        <begin position="1"/>
        <end position="21"/>
    </location>
</feature>
<feature type="transmembrane region" description="Helical" evidence="1">
    <location>
        <begin position="38"/>
        <end position="58"/>
    </location>
</feature>
<feature type="transmembrane region" description="Helical" evidence="1">
    <location>
        <begin position="69"/>
        <end position="89"/>
    </location>
</feature>
<feature type="transmembrane region" description="Helical" evidence="1">
    <location>
        <begin position="99"/>
        <end position="119"/>
    </location>
</feature>
<feature type="binding site" evidence="1">
    <location>
        <position position="76"/>
    </location>
    <ligand>
        <name>Na(+)</name>
        <dbReference type="ChEBI" id="CHEBI:29101"/>
        <note>structural</note>
    </ligand>
</feature>
<feature type="binding site" evidence="1">
    <location>
        <position position="79"/>
    </location>
    <ligand>
        <name>Na(+)</name>
        <dbReference type="ChEBI" id="CHEBI:29101"/>
        <note>structural</note>
    </ligand>
</feature>
<keyword id="KW-0997">Cell inner membrane</keyword>
<keyword id="KW-1003">Cell membrane</keyword>
<keyword id="KW-0407">Ion channel</keyword>
<keyword id="KW-0406">Ion transport</keyword>
<keyword id="KW-0472">Membrane</keyword>
<keyword id="KW-0479">Metal-binding</keyword>
<keyword id="KW-0915">Sodium</keyword>
<keyword id="KW-0812">Transmembrane</keyword>
<keyword id="KW-1133">Transmembrane helix</keyword>
<keyword id="KW-0813">Transport</keyword>
<comment type="function">
    <text evidence="1">Fluoride-specific ion channel. Important for reducing fluoride concentration in the cell, thus reducing its toxicity.</text>
</comment>
<comment type="catalytic activity">
    <reaction evidence="1">
        <text>fluoride(in) = fluoride(out)</text>
        <dbReference type="Rhea" id="RHEA:76159"/>
        <dbReference type="ChEBI" id="CHEBI:17051"/>
    </reaction>
    <physiologicalReaction direction="left-to-right" evidence="1">
        <dbReference type="Rhea" id="RHEA:76160"/>
    </physiologicalReaction>
</comment>
<comment type="activity regulation">
    <text evidence="1">Na(+) is not transported, but it plays an essential structural role and its presence is essential for fluoride channel function.</text>
</comment>
<comment type="subcellular location">
    <subcellularLocation>
        <location evidence="1">Cell inner membrane</location>
        <topology evidence="1">Multi-pass membrane protein</topology>
    </subcellularLocation>
</comment>
<comment type="similarity">
    <text evidence="1">Belongs to the fluoride channel Fluc/FEX (TC 1.A.43) family.</text>
</comment>
<gene>
    <name evidence="1" type="primary">fluC</name>
    <name evidence="1" type="synonym">crcB</name>
    <name type="ordered locus">Pfl01_3583</name>
</gene>
<sequence>MVPLIVAVSVGGIAGTLLRFATGNWVNANWPRHFYTATLAVNIVGCLLIGVLYGLFLIRPEVPIEVRAGLMVGFLGGLTTFSSFSLDTVRLLESGQVPLALGYAAISVFGGLLATWAGLSLTKL</sequence>
<protein>
    <recommendedName>
        <fullName evidence="1">Fluoride-specific ion channel FluC</fullName>
    </recommendedName>
</protein>
<accession>Q3KA83</accession>
<name>FLUC_PSEPF</name>
<evidence type="ECO:0000255" key="1">
    <source>
        <dbReference type="HAMAP-Rule" id="MF_00454"/>
    </source>
</evidence>